<comment type="function">
    <text evidence="1">Functions in the biosynthesis of branched-chain amino acids. Catalyzes the dehydration of (2R,3R)-2,3-dihydroxy-3-methylpentanoate (2,3-dihydroxy-3-methylvalerate) into 2-oxo-3-methylpentanoate (2-oxo-3-methylvalerate) and of (2R)-2,3-dihydroxy-3-methylbutanoate (2,3-dihydroxyisovalerate) into 2-oxo-3-methylbutanoate (2-oxoisovalerate), the penultimate precursor to L-isoleucine and L-valine, respectively.</text>
</comment>
<comment type="catalytic activity">
    <reaction evidence="1">
        <text>(2R)-2,3-dihydroxy-3-methylbutanoate = 3-methyl-2-oxobutanoate + H2O</text>
        <dbReference type="Rhea" id="RHEA:24809"/>
        <dbReference type="ChEBI" id="CHEBI:11851"/>
        <dbReference type="ChEBI" id="CHEBI:15377"/>
        <dbReference type="ChEBI" id="CHEBI:49072"/>
        <dbReference type="EC" id="4.2.1.9"/>
    </reaction>
    <physiologicalReaction direction="left-to-right" evidence="1">
        <dbReference type="Rhea" id="RHEA:24810"/>
    </physiologicalReaction>
</comment>
<comment type="catalytic activity">
    <reaction evidence="1">
        <text>(2R,3R)-2,3-dihydroxy-3-methylpentanoate = (S)-3-methyl-2-oxopentanoate + H2O</text>
        <dbReference type="Rhea" id="RHEA:27694"/>
        <dbReference type="ChEBI" id="CHEBI:15377"/>
        <dbReference type="ChEBI" id="CHEBI:35146"/>
        <dbReference type="ChEBI" id="CHEBI:49258"/>
        <dbReference type="EC" id="4.2.1.9"/>
    </reaction>
    <physiologicalReaction direction="left-to-right" evidence="1">
        <dbReference type="Rhea" id="RHEA:27695"/>
    </physiologicalReaction>
</comment>
<comment type="cofactor">
    <cofactor evidence="1">
        <name>[2Fe-2S] cluster</name>
        <dbReference type="ChEBI" id="CHEBI:190135"/>
    </cofactor>
    <text evidence="1">Binds 1 [2Fe-2S] cluster per subunit. This cluster acts as a Lewis acid cofactor.</text>
</comment>
<comment type="cofactor">
    <cofactor evidence="1">
        <name>Mg(2+)</name>
        <dbReference type="ChEBI" id="CHEBI:18420"/>
    </cofactor>
</comment>
<comment type="pathway">
    <text evidence="1">Amino-acid biosynthesis; L-isoleucine biosynthesis; L-isoleucine from 2-oxobutanoate: step 3/4.</text>
</comment>
<comment type="pathway">
    <text evidence="1">Amino-acid biosynthesis; L-valine biosynthesis; L-valine from pyruvate: step 3/4.</text>
</comment>
<comment type="subunit">
    <text evidence="1">Homodimer.</text>
</comment>
<comment type="similarity">
    <text evidence="1">Belongs to the IlvD/Edd family.</text>
</comment>
<feature type="chain" id="PRO_0000103504" description="Dihydroxy-acid dehydratase">
    <location>
        <begin position="1"/>
        <end position="616"/>
    </location>
</feature>
<feature type="active site" description="Proton acceptor" evidence="1">
    <location>
        <position position="517"/>
    </location>
</feature>
<feature type="binding site" evidence="1">
    <location>
        <position position="81"/>
    </location>
    <ligand>
        <name>Mg(2+)</name>
        <dbReference type="ChEBI" id="CHEBI:18420"/>
    </ligand>
</feature>
<feature type="binding site" evidence="1">
    <location>
        <position position="122"/>
    </location>
    <ligand>
        <name>[2Fe-2S] cluster</name>
        <dbReference type="ChEBI" id="CHEBI:190135"/>
    </ligand>
</feature>
<feature type="binding site" evidence="1">
    <location>
        <position position="123"/>
    </location>
    <ligand>
        <name>Mg(2+)</name>
        <dbReference type="ChEBI" id="CHEBI:18420"/>
    </ligand>
</feature>
<feature type="binding site" description="via carbamate group" evidence="1">
    <location>
        <position position="124"/>
    </location>
    <ligand>
        <name>Mg(2+)</name>
        <dbReference type="ChEBI" id="CHEBI:18420"/>
    </ligand>
</feature>
<feature type="binding site" evidence="1">
    <location>
        <position position="195"/>
    </location>
    <ligand>
        <name>[2Fe-2S] cluster</name>
        <dbReference type="ChEBI" id="CHEBI:190135"/>
    </ligand>
</feature>
<feature type="binding site" evidence="1">
    <location>
        <position position="491"/>
    </location>
    <ligand>
        <name>Mg(2+)</name>
        <dbReference type="ChEBI" id="CHEBI:18420"/>
    </ligand>
</feature>
<feature type="modified residue" description="N6-carboxylysine" evidence="1">
    <location>
        <position position="124"/>
    </location>
</feature>
<sequence>MPKYRSATTTHGRNMAGARALWRATGMTDADFGKPIIAVVNSFTQFVPGHVHLRDLGKLVAEQIEAAGGVAKEFNTIAVDDGIAMGHGGMLYSLPSRELIADSVEYMVNAHCADAMVCISNCDKITPGMLMASLRLNIPVIFVSGGPMEAGKTKLSDQIIKLDLVDAMIQGADPKVSDSQSDQVERSACPTCGSCSGMFTANSMNCLTEALGLSQPGNGSLLATHADRKQLFLNAGKRIVELTKRYYEQNDESALPRNIASKAAFENAMTLDIAMGGSTNTVLHLLAAAQEAEIDFTMSDIDKLSRKVPQLCKVAPSTQKYHMEDVHRAGGVIGILGELDRAGLLNRDVKNVLGLTLPQTLEQYDVMLTQDDAVKNMFRAGPAGIRTTQAFSQDCRWDSLDDDRANGCIRSLEHAYSKDGGLAVLYGNFAENGCIVKTAGVDDSILKFTGPAKVYESQDDAVEAILGGKVVAGDVVVIRYEGPKGGPGMQEMLYPTSFLKSMGLGKACALITDGRFSGGTSGLSIGHVSPEAASGGSIGLIEDGDLIAIDIPNRGIQLQVSDAELAARREAQEARGDKAWTPKNRERQVSFALCAYASLATSADKGAVRDKSKLGG</sequence>
<protein>
    <recommendedName>
        <fullName evidence="1">Dihydroxy-acid dehydratase</fullName>
        <shortName evidence="1">DAD</shortName>
        <ecNumber evidence="1">4.2.1.9</ecNumber>
    </recommendedName>
</protein>
<gene>
    <name evidence="1" type="primary">ilvD</name>
    <name type="ordered locus">SF3846</name>
    <name type="ordered locus">S3913</name>
</gene>
<organism>
    <name type="scientific">Shigella flexneri</name>
    <dbReference type="NCBI Taxonomy" id="623"/>
    <lineage>
        <taxon>Bacteria</taxon>
        <taxon>Pseudomonadati</taxon>
        <taxon>Pseudomonadota</taxon>
        <taxon>Gammaproteobacteria</taxon>
        <taxon>Enterobacterales</taxon>
        <taxon>Enterobacteriaceae</taxon>
        <taxon>Shigella</taxon>
    </lineage>
</organism>
<name>ILVD_SHIFL</name>
<evidence type="ECO:0000255" key="1">
    <source>
        <dbReference type="HAMAP-Rule" id="MF_00012"/>
    </source>
</evidence>
<keyword id="KW-0001">2Fe-2S</keyword>
<keyword id="KW-0028">Amino-acid biosynthesis</keyword>
<keyword id="KW-0100">Branched-chain amino acid biosynthesis</keyword>
<keyword id="KW-0408">Iron</keyword>
<keyword id="KW-0411">Iron-sulfur</keyword>
<keyword id="KW-0456">Lyase</keyword>
<keyword id="KW-0460">Magnesium</keyword>
<keyword id="KW-0479">Metal-binding</keyword>
<keyword id="KW-1185">Reference proteome</keyword>
<reference key="1">
    <citation type="journal article" date="2002" name="Nucleic Acids Res.">
        <title>Genome sequence of Shigella flexneri 2a: insights into pathogenicity through comparison with genomes of Escherichia coli K12 and O157.</title>
        <authorList>
            <person name="Jin Q."/>
            <person name="Yuan Z."/>
            <person name="Xu J."/>
            <person name="Wang Y."/>
            <person name="Shen Y."/>
            <person name="Lu W."/>
            <person name="Wang J."/>
            <person name="Liu H."/>
            <person name="Yang J."/>
            <person name="Yang F."/>
            <person name="Zhang X."/>
            <person name="Zhang J."/>
            <person name="Yang G."/>
            <person name="Wu H."/>
            <person name="Qu D."/>
            <person name="Dong J."/>
            <person name="Sun L."/>
            <person name="Xue Y."/>
            <person name="Zhao A."/>
            <person name="Gao Y."/>
            <person name="Zhu J."/>
            <person name="Kan B."/>
            <person name="Ding K."/>
            <person name="Chen S."/>
            <person name="Cheng H."/>
            <person name="Yao Z."/>
            <person name="He B."/>
            <person name="Chen R."/>
            <person name="Ma D."/>
            <person name="Qiang B."/>
            <person name="Wen Y."/>
            <person name="Hou Y."/>
            <person name="Yu J."/>
        </authorList>
    </citation>
    <scope>NUCLEOTIDE SEQUENCE [LARGE SCALE GENOMIC DNA]</scope>
    <source>
        <strain>301 / Serotype 2a</strain>
    </source>
</reference>
<reference key="2">
    <citation type="journal article" date="2003" name="Infect. Immun.">
        <title>Complete genome sequence and comparative genomics of Shigella flexneri serotype 2a strain 2457T.</title>
        <authorList>
            <person name="Wei J."/>
            <person name="Goldberg M.B."/>
            <person name="Burland V."/>
            <person name="Venkatesan M.M."/>
            <person name="Deng W."/>
            <person name="Fournier G."/>
            <person name="Mayhew G.F."/>
            <person name="Plunkett G. III"/>
            <person name="Rose D.J."/>
            <person name="Darling A."/>
            <person name="Mau B."/>
            <person name="Perna N.T."/>
            <person name="Payne S.M."/>
            <person name="Runyen-Janecky L.J."/>
            <person name="Zhou S."/>
            <person name="Schwartz D.C."/>
            <person name="Blattner F.R."/>
        </authorList>
    </citation>
    <scope>NUCLEOTIDE SEQUENCE [LARGE SCALE GENOMIC DNA]</scope>
    <source>
        <strain>ATCC 700930 / 2457T / Serotype 2a</strain>
    </source>
</reference>
<dbReference type="EC" id="4.2.1.9" evidence="1"/>
<dbReference type="EMBL" id="AE005674">
    <property type="protein sequence ID" value="AAN45283.1"/>
    <property type="molecule type" value="Genomic_DNA"/>
</dbReference>
<dbReference type="EMBL" id="AE014073">
    <property type="protein sequence ID" value="AAP18914.1"/>
    <property type="molecule type" value="Genomic_DNA"/>
</dbReference>
<dbReference type="RefSeq" id="NP_709576.1">
    <property type="nucleotide sequence ID" value="NC_004337.2"/>
</dbReference>
<dbReference type="RefSeq" id="WP_001127393.1">
    <property type="nucleotide sequence ID" value="NZ_WPGW01000028.1"/>
</dbReference>
<dbReference type="SMR" id="Q83PI6"/>
<dbReference type="STRING" id="198214.SF3846"/>
<dbReference type="PaxDb" id="198214-SF3846"/>
<dbReference type="GeneID" id="1026062"/>
<dbReference type="KEGG" id="sfl:SF3846"/>
<dbReference type="KEGG" id="sfx:S3913"/>
<dbReference type="PATRIC" id="fig|198214.7.peg.4537"/>
<dbReference type="HOGENOM" id="CLU_014271_4_2_6"/>
<dbReference type="UniPathway" id="UPA00047">
    <property type="reaction ID" value="UER00057"/>
</dbReference>
<dbReference type="UniPathway" id="UPA00049">
    <property type="reaction ID" value="UER00061"/>
</dbReference>
<dbReference type="Proteomes" id="UP000001006">
    <property type="component" value="Chromosome"/>
</dbReference>
<dbReference type="Proteomes" id="UP000002673">
    <property type="component" value="Chromosome"/>
</dbReference>
<dbReference type="GO" id="GO:0005829">
    <property type="term" value="C:cytosol"/>
    <property type="evidence" value="ECO:0007669"/>
    <property type="project" value="TreeGrafter"/>
</dbReference>
<dbReference type="GO" id="GO:0051537">
    <property type="term" value="F:2 iron, 2 sulfur cluster binding"/>
    <property type="evidence" value="ECO:0007669"/>
    <property type="project" value="UniProtKB-UniRule"/>
</dbReference>
<dbReference type="GO" id="GO:0004160">
    <property type="term" value="F:dihydroxy-acid dehydratase activity"/>
    <property type="evidence" value="ECO:0007669"/>
    <property type="project" value="UniProtKB-UniRule"/>
</dbReference>
<dbReference type="GO" id="GO:0000287">
    <property type="term" value="F:magnesium ion binding"/>
    <property type="evidence" value="ECO:0007669"/>
    <property type="project" value="UniProtKB-UniRule"/>
</dbReference>
<dbReference type="GO" id="GO:0009097">
    <property type="term" value="P:isoleucine biosynthetic process"/>
    <property type="evidence" value="ECO:0007669"/>
    <property type="project" value="UniProtKB-UniRule"/>
</dbReference>
<dbReference type="GO" id="GO:0009099">
    <property type="term" value="P:L-valine biosynthetic process"/>
    <property type="evidence" value="ECO:0007669"/>
    <property type="project" value="UniProtKB-UniRule"/>
</dbReference>
<dbReference type="FunFam" id="3.50.30.80:FF:000001">
    <property type="entry name" value="Dihydroxy-acid dehydratase"/>
    <property type="match status" value="1"/>
</dbReference>
<dbReference type="Gene3D" id="3.50.30.80">
    <property type="entry name" value="IlvD/EDD C-terminal domain-like"/>
    <property type="match status" value="1"/>
</dbReference>
<dbReference type="HAMAP" id="MF_00012">
    <property type="entry name" value="IlvD"/>
    <property type="match status" value="1"/>
</dbReference>
<dbReference type="InterPro" id="IPR042096">
    <property type="entry name" value="Dihydro-acid_dehy_C"/>
</dbReference>
<dbReference type="InterPro" id="IPR004404">
    <property type="entry name" value="DihydroxyA_deHydtase"/>
</dbReference>
<dbReference type="InterPro" id="IPR020558">
    <property type="entry name" value="DiOHA_6PGluconate_deHydtase_CS"/>
</dbReference>
<dbReference type="InterPro" id="IPR056740">
    <property type="entry name" value="ILV_EDD_C"/>
</dbReference>
<dbReference type="InterPro" id="IPR000581">
    <property type="entry name" value="ILV_EDD_N"/>
</dbReference>
<dbReference type="InterPro" id="IPR037237">
    <property type="entry name" value="IlvD/EDD_N"/>
</dbReference>
<dbReference type="NCBIfam" id="TIGR00110">
    <property type="entry name" value="ilvD"/>
    <property type="match status" value="1"/>
</dbReference>
<dbReference type="NCBIfam" id="NF009103">
    <property type="entry name" value="PRK12448.1"/>
    <property type="match status" value="1"/>
</dbReference>
<dbReference type="PANTHER" id="PTHR43661">
    <property type="entry name" value="D-XYLONATE DEHYDRATASE"/>
    <property type="match status" value="1"/>
</dbReference>
<dbReference type="PANTHER" id="PTHR43661:SF3">
    <property type="entry name" value="D-XYLONATE DEHYDRATASE YAGF-RELATED"/>
    <property type="match status" value="1"/>
</dbReference>
<dbReference type="Pfam" id="PF24877">
    <property type="entry name" value="ILV_EDD_C"/>
    <property type="match status" value="1"/>
</dbReference>
<dbReference type="Pfam" id="PF00920">
    <property type="entry name" value="ILVD_EDD_N"/>
    <property type="match status" value="1"/>
</dbReference>
<dbReference type="SUPFAM" id="SSF143975">
    <property type="entry name" value="IlvD/EDD N-terminal domain-like"/>
    <property type="match status" value="1"/>
</dbReference>
<dbReference type="SUPFAM" id="SSF52016">
    <property type="entry name" value="LeuD/IlvD-like"/>
    <property type="match status" value="1"/>
</dbReference>
<dbReference type="PROSITE" id="PS00886">
    <property type="entry name" value="ILVD_EDD_1"/>
    <property type="match status" value="1"/>
</dbReference>
<dbReference type="PROSITE" id="PS00887">
    <property type="entry name" value="ILVD_EDD_2"/>
    <property type="match status" value="1"/>
</dbReference>
<accession>Q83PI6</accession>
<proteinExistence type="inferred from homology"/>